<gene>
    <name evidence="3" type="primary">deoD</name>
    <name type="ordered locus">STM4570</name>
</gene>
<organism>
    <name type="scientific">Salmonella typhimurium (strain LT2 / SGSC1412 / ATCC 700720)</name>
    <dbReference type="NCBI Taxonomy" id="99287"/>
    <lineage>
        <taxon>Bacteria</taxon>
        <taxon>Pseudomonadati</taxon>
        <taxon>Pseudomonadota</taxon>
        <taxon>Gammaproteobacteria</taxon>
        <taxon>Enterobacterales</taxon>
        <taxon>Enterobacteriaceae</taxon>
        <taxon>Salmonella</taxon>
    </lineage>
</organism>
<evidence type="ECO:0000250" key="1">
    <source>
        <dbReference type="UniProtKB" id="P0ABP8"/>
    </source>
</evidence>
<evidence type="ECO:0000250" key="2">
    <source>
        <dbReference type="UniProtKB" id="P50389"/>
    </source>
</evidence>
<evidence type="ECO:0000255" key="3">
    <source>
        <dbReference type="HAMAP-Rule" id="MF_01627"/>
    </source>
</evidence>
<evidence type="ECO:0000269" key="4">
    <source>
    </source>
</evidence>
<sequence length="239" mass="25978">MATPHINAEMGDFADVVLMPGDPLRAKHIAETFLENVREVNNVRGMLGFTGTYKGRKISVMGHGMGIPSCSIYTKELITDFGVKKIIRVGSCGAVRMDVKLRDVVIGMGACTDSKVNRIRFKDHDFAAIADFDMVRNAVDAAKALGVDARVGNLFSADLFYSPDGEMFDVMEKYGVLGVEMEAAGIYGVAAEFGAKALTICTVSDHIRTHEQTTAAERQTTFNDMIKIALESVLLGDKE</sequence>
<protein>
    <recommendedName>
        <fullName evidence="3">Purine nucleoside phosphorylase DeoD-type</fullName>
        <shortName evidence="3">PNP</shortName>
        <ecNumber evidence="3 4">2.4.2.1</ecNumber>
    </recommendedName>
</protein>
<feature type="chain" id="PRO_0000063158" description="Purine nucleoside phosphorylase DeoD-type">
    <location>
        <begin position="1"/>
        <end position="239"/>
    </location>
</feature>
<feature type="active site" description="Proton donor" evidence="1 3">
    <location>
        <position position="205"/>
    </location>
</feature>
<feature type="binding site" evidence="2 3">
    <location>
        <position position="5"/>
    </location>
    <ligand>
        <name>a purine D-ribonucleoside</name>
        <dbReference type="ChEBI" id="CHEBI:142355"/>
        <note>ligand shared between dimeric partners</note>
    </ligand>
</feature>
<feature type="binding site" description="in other chain" evidence="2 3">
    <location>
        <position position="21"/>
    </location>
    <ligand>
        <name>phosphate</name>
        <dbReference type="ChEBI" id="CHEBI:43474"/>
        <note>ligand shared between dimeric partners</note>
    </ligand>
</feature>
<feature type="binding site" description="in other chain" evidence="2 3">
    <location>
        <position position="25"/>
    </location>
    <ligand>
        <name>phosphate</name>
        <dbReference type="ChEBI" id="CHEBI:43474"/>
        <note>ligand shared between dimeric partners</note>
    </ligand>
</feature>
<feature type="binding site" evidence="2 3">
    <location>
        <position position="44"/>
    </location>
    <ligand>
        <name>phosphate</name>
        <dbReference type="ChEBI" id="CHEBI:43474"/>
        <note>ligand shared between dimeric partners</note>
    </ligand>
</feature>
<feature type="binding site" description="in other chain" evidence="2 3">
    <location>
        <begin position="88"/>
        <end position="91"/>
    </location>
    <ligand>
        <name>phosphate</name>
        <dbReference type="ChEBI" id="CHEBI:43474"/>
        <note>ligand shared between dimeric partners</note>
    </ligand>
</feature>
<feature type="binding site" description="in other chain" evidence="2 3">
    <location>
        <begin position="180"/>
        <end position="182"/>
    </location>
    <ligand>
        <name>a purine D-ribonucleoside</name>
        <dbReference type="ChEBI" id="CHEBI:142355"/>
        <note>ligand shared between dimeric partners</note>
    </ligand>
</feature>
<feature type="binding site" description="in other chain" evidence="2 3">
    <location>
        <begin position="204"/>
        <end position="205"/>
    </location>
    <ligand>
        <name>a purine D-ribonucleoside</name>
        <dbReference type="ChEBI" id="CHEBI:142355"/>
        <note>ligand shared between dimeric partners</note>
    </ligand>
</feature>
<feature type="site" description="Important for catalytic activity" evidence="1 3">
    <location>
        <position position="218"/>
    </location>
</feature>
<keyword id="KW-0328">Glycosyltransferase</keyword>
<keyword id="KW-1185">Reference proteome</keyword>
<keyword id="KW-0808">Transferase</keyword>
<name>DEOD_SALTY</name>
<comment type="function">
    <text evidence="4">Catalyzes the reversible phosphorolytic breakdown of the N-glycosidic bond in the beta-(deoxy)ribonucleoside molecules, with the formation of the corresponding free purine bases and pentose-1-phosphate (PubMed:235429). Acts on 6-amino and 6-oxopurines including deoxyinosine, deoxyguanosine, deoxyadenosine, adenosine, guanosine, and inosine (PubMed:235429).</text>
</comment>
<comment type="catalytic activity">
    <reaction evidence="3">
        <text>a purine D-ribonucleoside + phosphate = a purine nucleobase + alpha-D-ribose 1-phosphate</text>
        <dbReference type="Rhea" id="RHEA:19805"/>
        <dbReference type="ChEBI" id="CHEBI:26386"/>
        <dbReference type="ChEBI" id="CHEBI:43474"/>
        <dbReference type="ChEBI" id="CHEBI:57720"/>
        <dbReference type="ChEBI" id="CHEBI:142355"/>
        <dbReference type="EC" id="2.4.2.1"/>
    </reaction>
</comment>
<comment type="catalytic activity">
    <reaction evidence="3">
        <text>a purine 2'-deoxy-D-ribonucleoside + phosphate = a purine nucleobase + 2-deoxy-alpha-D-ribose 1-phosphate</text>
        <dbReference type="Rhea" id="RHEA:36431"/>
        <dbReference type="ChEBI" id="CHEBI:26386"/>
        <dbReference type="ChEBI" id="CHEBI:43474"/>
        <dbReference type="ChEBI" id="CHEBI:57259"/>
        <dbReference type="ChEBI" id="CHEBI:142361"/>
        <dbReference type="EC" id="2.4.2.1"/>
    </reaction>
</comment>
<comment type="catalytic activity">
    <reaction evidence="4">
        <text>inosine + phosphate = alpha-D-ribose 1-phosphate + hypoxanthine</text>
        <dbReference type="Rhea" id="RHEA:27646"/>
        <dbReference type="ChEBI" id="CHEBI:17368"/>
        <dbReference type="ChEBI" id="CHEBI:17596"/>
        <dbReference type="ChEBI" id="CHEBI:43474"/>
        <dbReference type="ChEBI" id="CHEBI:57720"/>
        <dbReference type="EC" id="2.4.2.1"/>
    </reaction>
    <physiologicalReaction direction="left-to-right" evidence="4">
        <dbReference type="Rhea" id="RHEA:27647"/>
    </physiologicalReaction>
    <physiologicalReaction direction="right-to-left" evidence="4">
        <dbReference type="Rhea" id="RHEA:27648"/>
    </physiologicalReaction>
</comment>
<comment type="catalytic activity">
    <reaction evidence="4">
        <text>adenosine + phosphate = alpha-D-ribose 1-phosphate + adenine</text>
        <dbReference type="Rhea" id="RHEA:27642"/>
        <dbReference type="ChEBI" id="CHEBI:16335"/>
        <dbReference type="ChEBI" id="CHEBI:16708"/>
        <dbReference type="ChEBI" id="CHEBI:43474"/>
        <dbReference type="ChEBI" id="CHEBI:57720"/>
        <dbReference type="EC" id="2.4.2.1"/>
    </reaction>
</comment>
<comment type="catalytic activity">
    <reaction evidence="4">
        <text>guanosine + phosphate = alpha-D-ribose 1-phosphate + guanine</text>
        <dbReference type="Rhea" id="RHEA:13233"/>
        <dbReference type="ChEBI" id="CHEBI:16235"/>
        <dbReference type="ChEBI" id="CHEBI:16750"/>
        <dbReference type="ChEBI" id="CHEBI:43474"/>
        <dbReference type="ChEBI" id="CHEBI:57720"/>
        <dbReference type="EC" id="2.4.2.1"/>
    </reaction>
</comment>
<comment type="catalytic activity">
    <reaction evidence="4">
        <text>2'-deoxyadenosine + phosphate = 2-deoxy-alpha-D-ribose 1-phosphate + adenine</text>
        <dbReference type="Rhea" id="RHEA:27742"/>
        <dbReference type="ChEBI" id="CHEBI:16708"/>
        <dbReference type="ChEBI" id="CHEBI:17256"/>
        <dbReference type="ChEBI" id="CHEBI:43474"/>
        <dbReference type="ChEBI" id="CHEBI:57259"/>
        <dbReference type="EC" id="2.4.2.1"/>
    </reaction>
</comment>
<comment type="catalytic activity">
    <reaction evidence="4">
        <text>2'-deoxyguanosine + phosphate = 2-deoxy-alpha-D-ribose 1-phosphate + guanine</text>
        <dbReference type="Rhea" id="RHEA:27738"/>
        <dbReference type="ChEBI" id="CHEBI:16235"/>
        <dbReference type="ChEBI" id="CHEBI:17172"/>
        <dbReference type="ChEBI" id="CHEBI:43474"/>
        <dbReference type="ChEBI" id="CHEBI:57259"/>
        <dbReference type="EC" id="2.4.2.1"/>
    </reaction>
</comment>
<comment type="catalytic activity">
    <reaction evidence="4">
        <text>2'-deoxyinosine + phosphate = 2-deoxy-alpha-D-ribose 1-phosphate + hypoxanthine</text>
        <dbReference type="Rhea" id="RHEA:27750"/>
        <dbReference type="ChEBI" id="CHEBI:17368"/>
        <dbReference type="ChEBI" id="CHEBI:28997"/>
        <dbReference type="ChEBI" id="CHEBI:43474"/>
        <dbReference type="ChEBI" id="CHEBI:57259"/>
        <dbReference type="EC" id="2.4.2.1"/>
    </reaction>
</comment>
<comment type="biophysicochemical properties">
    <kinetics>
        <KM evidence="4">100 uM for phosphate (at pH 7.1)</KM>
        <KM evidence="4">90 uM for inosine (at pH 7.1)</KM>
        <KM evidence="4">170 uM for deoxyinosine (at pH 7.1)</KM>
        <KM evidence="4">100 uM for deoxyribose-1-phosphate (at pH 7.1)</KM>
        <KM evidence="4">110 uM for adenine (at pH 7.1)</KM>
        <Vmax evidence="4">115.0 umol/min/mg enzyme toward phosphate (at pH 7.1)</Vmax>
        <Vmax evidence="4">352.0 umol/min/mg enzyme toward inosine (at pH 7.1)</Vmax>
        <Vmax evidence="4">732.0 umol/min/mg enzyme toward deoxyinosine (at pH 7.1)</Vmax>
        <Vmax evidence="4">1025.0 umol/min/mg enzyme toward deoxyribose-1-phosphate (at pH 7.1)</Vmax>
        <Vmax evidence="4">795.0 umol/min/mg enzyme toward adenine (with deoxyribose-1-phosphate as cosubstrate and at pH 7.1)</Vmax>
    </kinetics>
</comment>
<comment type="subunit">
    <text evidence="3 4">Homohexamer; trimer of homodimers.</text>
</comment>
<comment type="similarity">
    <text evidence="3">Belongs to the PNP/UDP phosphorylase family.</text>
</comment>
<dbReference type="EC" id="2.4.2.1" evidence="3 4"/>
<dbReference type="EMBL" id="AE006468">
    <property type="protein sequence ID" value="AAL23385.1"/>
    <property type="molecule type" value="Genomic_DNA"/>
</dbReference>
<dbReference type="RefSeq" id="NP_463426.1">
    <property type="nucleotide sequence ID" value="NC_003197.2"/>
</dbReference>
<dbReference type="RefSeq" id="WP_000224870.1">
    <property type="nucleotide sequence ID" value="NC_003197.2"/>
</dbReference>
<dbReference type="SMR" id="Q8ZJV7"/>
<dbReference type="STRING" id="99287.STM4570"/>
<dbReference type="PaxDb" id="99287-STM4570"/>
<dbReference type="GeneID" id="1256096"/>
<dbReference type="KEGG" id="stm:STM4570"/>
<dbReference type="PATRIC" id="fig|99287.12.peg.4812"/>
<dbReference type="HOGENOM" id="CLU_068457_2_0_6"/>
<dbReference type="OMA" id="PQCLLCG"/>
<dbReference type="PhylomeDB" id="Q8ZJV7"/>
<dbReference type="BioCyc" id="SENT99287:STM4570-MONOMER"/>
<dbReference type="SABIO-RK" id="Q8ZJV7"/>
<dbReference type="Proteomes" id="UP000001014">
    <property type="component" value="Chromosome"/>
</dbReference>
<dbReference type="GO" id="GO:0005829">
    <property type="term" value="C:cytosol"/>
    <property type="evidence" value="ECO:0000318"/>
    <property type="project" value="GO_Central"/>
</dbReference>
<dbReference type="GO" id="GO:0047975">
    <property type="term" value="F:guanosine phosphorylase activity"/>
    <property type="evidence" value="ECO:0007669"/>
    <property type="project" value="RHEA"/>
</dbReference>
<dbReference type="GO" id="GO:0004731">
    <property type="term" value="F:purine-nucleoside phosphorylase activity"/>
    <property type="evidence" value="ECO:0000318"/>
    <property type="project" value="GO_Central"/>
</dbReference>
<dbReference type="GO" id="GO:0006152">
    <property type="term" value="P:purine nucleoside catabolic process"/>
    <property type="evidence" value="ECO:0000318"/>
    <property type="project" value="GO_Central"/>
</dbReference>
<dbReference type="CDD" id="cd09006">
    <property type="entry name" value="PNP_EcPNPI-like"/>
    <property type="match status" value="1"/>
</dbReference>
<dbReference type="FunFam" id="3.40.50.1580:FF:000002">
    <property type="entry name" value="Purine nucleoside phosphorylase DeoD-type"/>
    <property type="match status" value="1"/>
</dbReference>
<dbReference type="Gene3D" id="3.40.50.1580">
    <property type="entry name" value="Nucleoside phosphorylase domain"/>
    <property type="match status" value="1"/>
</dbReference>
<dbReference type="HAMAP" id="MF_01627">
    <property type="entry name" value="Pur_nucleosid_phosp"/>
    <property type="match status" value="1"/>
</dbReference>
<dbReference type="InterPro" id="IPR004402">
    <property type="entry name" value="DeoD-type"/>
</dbReference>
<dbReference type="InterPro" id="IPR018016">
    <property type="entry name" value="Nucleoside_phosphorylase_CS"/>
</dbReference>
<dbReference type="InterPro" id="IPR000845">
    <property type="entry name" value="Nucleoside_phosphorylase_d"/>
</dbReference>
<dbReference type="InterPro" id="IPR035994">
    <property type="entry name" value="Nucleoside_phosphorylase_sf"/>
</dbReference>
<dbReference type="NCBIfam" id="TIGR00107">
    <property type="entry name" value="deoD"/>
    <property type="match status" value="1"/>
</dbReference>
<dbReference type="NCBIfam" id="NF004489">
    <property type="entry name" value="PRK05819.1"/>
    <property type="match status" value="1"/>
</dbReference>
<dbReference type="NCBIfam" id="NF009914">
    <property type="entry name" value="PRK13374.1"/>
    <property type="match status" value="1"/>
</dbReference>
<dbReference type="PANTHER" id="PTHR43691:SF2">
    <property type="entry name" value="PURINE NUCLEOSIDE PHOSPHORYLASE DEOD-TYPE"/>
    <property type="match status" value="1"/>
</dbReference>
<dbReference type="PANTHER" id="PTHR43691">
    <property type="entry name" value="URIDINE PHOSPHORYLASE"/>
    <property type="match status" value="1"/>
</dbReference>
<dbReference type="Pfam" id="PF01048">
    <property type="entry name" value="PNP_UDP_1"/>
    <property type="match status" value="1"/>
</dbReference>
<dbReference type="SUPFAM" id="SSF53167">
    <property type="entry name" value="Purine and uridine phosphorylases"/>
    <property type="match status" value="1"/>
</dbReference>
<dbReference type="PROSITE" id="PS01232">
    <property type="entry name" value="PNP_UDP_1"/>
    <property type="match status" value="1"/>
</dbReference>
<reference key="1">
    <citation type="journal article" date="2001" name="Nature">
        <title>Complete genome sequence of Salmonella enterica serovar Typhimurium LT2.</title>
        <authorList>
            <person name="McClelland M."/>
            <person name="Sanderson K.E."/>
            <person name="Spieth J."/>
            <person name="Clifton S.W."/>
            <person name="Latreille P."/>
            <person name="Courtney L."/>
            <person name="Porwollik S."/>
            <person name="Ali J."/>
            <person name="Dante M."/>
            <person name="Du F."/>
            <person name="Hou S."/>
            <person name="Layman D."/>
            <person name="Leonard S."/>
            <person name="Nguyen C."/>
            <person name="Scott K."/>
            <person name="Holmes A."/>
            <person name="Grewal N."/>
            <person name="Mulvaney E."/>
            <person name="Ryan E."/>
            <person name="Sun H."/>
            <person name="Florea L."/>
            <person name="Miller W."/>
            <person name="Stoneking T."/>
            <person name="Nhan M."/>
            <person name="Waterston R."/>
            <person name="Wilson R.K."/>
        </authorList>
    </citation>
    <scope>NUCLEOTIDE SEQUENCE [LARGE SCALE GENOMIC DNA]</scope>
    <source>
        <strain>LT2 / SGSC1412 / ATCC 700720</strain>
    </source>
</reference>
<reference key="2">
    <citation type="journal article" date="1975" name="Eur. J. Biochem.">
        <title>Purine nucleoside phosphorylase from Escherichia coli and Salmonella typhimurium. Purification and some properties.</title>
        <authorList>
            <person name="Jensen K.F."/>
            <person name="Nygaard P."/>
        </authorList>
    </citation>
    <scope>FUNCTION</scope>
    <scope>CATALYTIC ACTIVITY</scope>
    <scope>BIOPHYSICOCHEMICAL PROPERTIES</scope>
    <scope>SUBUNIT</scope>
</reference>
<proteinExistence type="evidence at protein level"/>
<accession>Q8ZJV7</accession>